<organism>
    <name type="scientific">Escherichia coli O1:K1 / APEC</name>
    <dbReference type="NCBI Taxonomy" id="405955"/>
    <lineage>
        <taxon>Bacteria</taxon>
        <taxon>Pseudomonadati</taxon>
        <taxon>Pseudomonadota</taxon>
        <taxon>Gammaproteobacteria</taxon>
        <taxon>Enterobacterales</taxon>
        <taxon>Enterobacteriaceae</taxon>
        <taxon>Escherichia</taxon>
    </lineage>
</organism>
<feature type="chain" id="PRO_1000002968" description="Phospho-N-acetylmuramoyl-pentapeptide-transferase">
    <location>
        <begin position="1"/>
        <end position="360"/>
    </location>
</feature>
<feature type="topological domain" description="Periplasmic" evidence="1">
    <location>
        <begin position="1"/>
        <end position="25"/>
    </location>
</feature>
<feature type="transmembrane region" description="Helical" evidence="1">
    <location>
        <begin position="26"/>
        <end position="46"/>
    </location>
</feature>
<feature type="topological domain" description="Cytoplasmic" evidence="1">
    <location>
        <begin position="47"/>
        <end position="71"/>
    </location>
</feature>
<feature type="transmembrane region" description="Helical" evidence="1">
    <location>
        <begin position="72"/>
        <end position="92"/>
    </location>
</feature>
<feature type="topological domain" description="Periplasmic" evidence="1">
    <location>
        <position position="93"/>
    </location>
</feature>
<feature type="transmembrane region" description="Helical" evidence="1">
    <location>
        <begin position="94"/>
        <end position="114"/>
    </location>
</feature>
<feature type="topological domain" description="Cytoplasmic" evidence="1">
    <location>
        <begin position="115"/>
        <end position="131"/>
    </location>
</feature>
<feature type="transmembrane region" description="Helical" evidence="1">
    <location>
        <begin position="132"/>
        <end position="152"/>
    </location>
</feature>
<feature type="topological domain" description="Periplasmic" evidence="1">
    <location>
        <begin position="153"/>
        <end position="167"/>
    </location>
</feature>
<feature type="transmembrane region" description="Helical" evidence="1">
    <location>
        <begin position="168"/>
        <end position="188"/>
    </location>
</feature>
<feature type="topological domain" description="Cytoplasmic" evidence="1">
    <location>
        <begin position="189"/>
        <end position="198"/>
    </location>
</feature>
<feature type="transmembrane region" description="Helical" evidence="1">
    <location>
        <begin position="199"/>
        <end position="219"/>
    </location>
</feature>
<feature type="topological domain" description="Periplasmic" evidence="1">
    <location>
        <begin position="220"/>
        <end position="235"/>
    </location>
</feature>
<feature type="transmembrane region" description="Helical" evidence="1">
    <location>
        <begin position="236"/>
        <end position="256"/>
    </location>
</feature>
<feature type="topological domain" description="Cytoplasmic" evidence="1">
    <location>
        <begin position="257"/>
        <end position="262"/>
    </location>
</feature>
<feature type="transmembrane region" description="Helical" evidence="1">
    <location>
        <begin position="263"/>
        <end position="283"/>
    </location>
</feature>
<feature type="topological domain" description="Periplasmic" evidence="1">
    <location>
        <begin position="284"/>
        <end position="287"/>
    </location>
</feature>
<feature type="transmembrane region" description="Helical" evidence="1">
    <location>
        <begin position="288"/>
        <end position="308"/>
    </location>
</feature>
<feature type="topological domain" description="Cytoplasmic" evidence="1">
    <location>
        <begin position="309"/>
        <end position="337"/>
    </location>
</feature>
<feature type="transmembrane region" description="Helical" evidence="1">
    <location>
        <begin position="338"/>
        <end position="358"/>
    </location>
</feature>
<feature type="topological domain" description="Periplasmic" evidence="1">
    <location>
        <begin position="359"/>
        <end position="360"/>
    </location>
</feature>
<reference key="1">
    <citation type="journal article" date="2007" name="J. Bacteriol.">
        <title>The genome sequence of avian pathogenic Escherichia coli strain O1:K1:H7 shares strong similarities with human extraintestinal pathogenic E. coli genomes.</title>
        <authorList>
            <person name="Johnson T.J."/>
            <person name="Kariyawasam S."/>
            <person name="Wannemuehler Y."/>
            <person name="Mangiamele P."/>
            <person name="Johnson S.J."/>
            <person name="Doetkott C."/>
            <person name="Skyberg J.A."/>
            <person name="Lynne A.M."/>
            <person name="Johnson J.R."/>
            <person name="Nolan L.K."/>
        </authorList>
    </citation>
    <scope>NUCLEOTIDE SEQUENCE [LARGE SCALE GENOMIC DNA]</scope>
</reference>
<evidence type="ECO:0000255" key="1">
    <source>
        <dbReference type="HAMAP-Rule" id="MF_00038"/>
    </source>
</evidence>
<name>MRAY_ECOK1</name>
<proteinExistence type="inferred from homology"/>
<accession>A1A7D2</accession>
<keyword id="KW-0131">Cell cycle</keyword>
<keyword id="KW-0132">Cell division</keyword>
<keyword id="KW-0997">Cell inner membrane</keyword>
<keyword id="KW-1003">Cell membrane</keyword>
<keyword id="KW-0133">Cell shape</keyword>
<keyword id="KW-0961">Cell wall biogenesis/degradation</keyword>
<keyword id="KW-0460">Magnesium</keyword>
<keyword id="KW-0472">Membrane</keyword>
<keyword id="KW-0479">Metal-binding</keyword>
<keyword id="KW-0573">Peptidoglycan synthesis</keyword>
<keyword id="KW-1185">Reference proteome</keyword>
<keyword id="KW-0808">Transferase</keyword>
<keyword id="KW-0812">Transmembrane</keyword>
<keyword id="KW-1133">Transmembrane helix</keyword>
<protein>
    <recommendedName>
        <fullName evidence="1">Phospho-N-acetylmuramoyl-pentapeptide-transferase</fullName>
        <ecNumber evidence="1">2.7.8.13</ecNumber>
    </recommendedName>
    <alternativeName>
        <fullName evidence="1">UDP-MurNAc-pentapeptide phosphotransferase</fullName>
    </alternativeName>
</protein>
<gene>
    <name evidence="1" type="primary">mraY</name>
    <name type="ordered locus">Ecok1_00780</name>
    <name type="ORF">APECO1_1899</name>
</gene>
<dbReference type="EC" id="2.7.8.13" evidence="1"/>
<dbReference type="EMBL" id="CP000468">
    <property type="protein sequence ID" value="ABI99571.1"/>
    <property type="molecule type" value="Genomic_DNA"/>
</dbReference>
<dbReference type="RefSeq" id="WP_000964131.1">
    <property type="nucleotide sequence ID" value="NZ_CADILS010000048.1"/>
</dbReference>
<dbReference type="SMR" id="A1A7D2"/>
<dbReference type="GeneID" id="93777347"/>
<dbReference type="KEGG" id="ecv:APECO1_1899"/>
<dbReference type="HOGENOM" id="CLU_023982_0_0_6"/>
<dbReference type="UniPathway" id="UPA00219"/>
<dbReference type="Proteomes" id="UP000008216">
    <property type="component" value="Chromosome"/>
</dbReference>
<dbReference type="GO" id="GO:0005886">
    <property type="term" value="C:plasma membrane"/>
    <property type="evidence" value="ECO:0007669"/>
    <property type="project" value="UniProtKB-SubCell"/>
</dbReference>
<dbReference type="GO" id="GO:0046872">
    <property type="term" value="F:metal ion binding"/>
    <property type="evidence" value="ECO:0007669"/>
    <property type="project" value="UniProtKB-KW"/>
</dbReference>
<dbReference type="GO" id="GO:0008963">
    <property type="term" value="F:phospho-N-acetylmuramoyl-pentapeptide-transferase activity"/>
    <property type="evidence" value="ECO:0007669"/>
    <property type="project" value="UniProtKB-UniRule"/>
</dbReference>
<dbReference type="GO" id="GO:0051992">
    <property type="term" value="F:UDP-N-acetylmuramoyl-L-alanyl-D-glutamyl-meso-2,6-diaminopimelyl-D-alanyl-D-alanine:undecaprenyl-phosphate transferase activity"/>
    <property type="evidence" value="ECO:0007669"/>
    <property type="project" value="RHEA"/>
</dbReference>
<dbReference type="GO" id="GO:0051301">
    <property type="term" value="P:cell division"/>
    <property type="evidence" value="ECO:0007669"/>
    <property type="project" value="UniProtKB-KW"/>
</dbReference>
<dbReference type="GO" id="GO:0071555">
    <property type="term" value="P:cell wall organization"/>
    <property type="evidence" value="ECO:0007669"/>
    <property type="project" value="UniProtKB-KW"/>
</dbReference>
<dbReference type="GO" id="GO:0009252">
    <property type="term" value="P:peptidoglycan biosynthetic process"/>
    <property type="evidence" value="ECO:0007669"/>
    <property type="project" value="UniProtKB-UniRule"/>
</dbReference>
<dbReference type="GO" id="GO:0008360">
    <property type="term" value="P:regulation of cell shape"/>
    <property type="evidence" value="ECO:0007669"/>
    <property type="project" value="UniProtKB-KW"/>
</dbReference>
<dbReference type="CDD" id="cd06852">
    <property type="entry name" value="GT_MraY"/>
    <property type="match status" value="1"/>
</dbReference>
<dbReference type="HAMAP" id="MF_00038">
    <property type="entry name" value="MraY"/>
    <property type="match status" value="1"/>
</dbReference>
<dbReference type="InterPro" id="IPR000715">
    <property type="entry name" value="Glycosyl_transferase_4"/>
</dbReference>
<dbReference type="InterPro" id="IPR003524">
    <property type="entry name" value="PNAcMuramoyl-5peptid_Trfase"/>
</dbReference>
<dbReference type="InterPro" id="IPR018480">
    <property type="entry name" value="PNAcMuramoyl-5peptid_Trfase_CS"/>
</dbReference>
<dbReference type="NCBIfam" id="TIGR00445">
    <property type="entry name" value="mraY"/>
    <property type="match status" value="1"/>
</dbReference>
<dbReference type="PANTHER" id="PTHR22926">
    <property type="entry name" value="PHOSPHO-N-ACETYLMURAMOYL-PENTAPEPTIDE-TRANSFERASE"/>
    <property type="match status" value="1"/>
</dbReference>
<dbReference type="PANTHER" id="PTHR22926:SF5">
    <property type="entry name" value="PHOSPHO-N-ACETYLMURAMOYL-PENTAPEPTIDE-TRANSFERASE HOMOLOG"/>
    <property type="match status" value="1"/>
</dbReference>
<dbReference type="Pfam" id="PF00953">
    <property type="entry name" value="Glycos_transf_4"/>
    <property type="match status" value="1"/>
</dbReference>
<dbReference type="Pfam" id="PF10555">
    <property type="entry name" value="MraY_sig1"/>
    <property type="match status" value="1"/>
</dbReference>
<dbReference type="PROSITE" id="PS01347">
    <property type="entry name" value="MRAY_1"/>
    <property type="match status" value="1"/>
</dbReference>
<dbReference type="PROSITE" id="PS01348">
    <property type="entry name" value="MRAY_2"/>
    <property type="match status" value="1"/>
</dbReference>
<comment type="function">
    <text evidence="1">Catalyzes the initial step of the lipid cycle reactions in the biosynthesis of the cell wall peptidoglycan: transfers peptidoglycan precursor phospho-MurNAc-pentapeptide from UDP-MurNAc-pentapeptide onto the lipid carrier undecaprenyl phosphate, yielding undecaprenyl-pyrophosphoryl-MurNAc-pentapeptide, known as lipid I.</text>
</comment>
<comment type="catalytic activity">
    <reaction evidence="1">
        <text>UDP-N-acetyl-alpha-D-muramoyl-L-alanyl-gamma-D-glutamyl-meso-2,6-diaminopimeloyl-D-alanyl-D-alanine + di-trans,octa-cis-undecaprenyl phosphate = di-trans,octa-cis-undecaprenyl diphospho-N-acetyl-alpha-D-muramoyl-L-alanyl-D-glutamyl-meso-2,6-diaminopimeloyl-D-alanyl-D-alanine + UMP</text>
        <dbReference type="Rhea" id="RHEA:28386"/>
        <dbReference type="ChEBI" id="CHEBI:57865"/>
        <dbReference type="ChEBI" id="CHEBI:60392"/>
        <dbReference type="ChEBI" id="CHEBI:61386"/>
        <dbReference type="ChEBI" id="CHEBI:61387"/>
        <dbReference type="EC" id="2.7.8.13"/>
    </reaction>
</comment>
<comment type="cofactor">
    <cofactor evidence="1">
        <name>Mg(2+)</name>
        <dbReference type="ChEBI" id="CHEBI:18420"/>
    </cofactor>
</comment>
<comment type="pathway">
    <text evidence="1">Cell wall biogenesis; peptidoglycan biosynthesis.</text>
</comment>
<comment type="subcellular location">
    <subcellularLocation>
        <location evidence="1">Cell inner membrane</location>
        <topology evidence="1">Multi-pass membrane protein</topology>
    </subcellularLocation>
</comment>
<comment type="similarity">
    <text evidence="1">Belongs to the glycosyltransferase 4 family. MraY subfamily.</text>
</comment>
<sequence length="360" mass="39875">MLVWLAEHLVKYYSGFNVFSYLTFRAIVSLLTALFISLWMGPRMIAHLQKLSFGQVVRNDGPESHFSKRGTPTMGGIMILTAIVISVLLWAYPSNPYVWCVLVVLVGYGVIGFVDDYRKVVRKDTKGLIARWKYFWMSVIALGVAFALYLAGKDTPATQLVVPFFKDVMPQLGLFYILLAYFVIVGTGNAVNLTDGLDGLAIMPTVFVAGGFALVAWATGNMNFASYLHIPYLRHAGELVIVCTAIVGAGLGFLWFNTYPAQVFMGDVGSLALGGALGIIAVLLRQEFLLVIMGGVFVVETLSVILQVGSFKLRGQRIFRMAPIHHHYELKGWPEPRVIVRFWIISLMLVLIGLATLKVR</sequence>